<comment type="subcellular location">
    <subcellularLocation>
        <location evidence="2">Cell membrane</location>
        <topology evidence="2">Single-pass membrane protein</topology>
    </subcellularLocation>
</comment>
<comment type="similarity">
    <text evidence="2">Belongs to the staphylococcal tandem lipoprotein family.</text>
</comment>
<sequence>MKAHKIFWLNLAAIIIISIVVSGGMFLAMKWEQIHLKDGLKKVLSTYPIKNLETLYEIDGHDNPHYENNDQDTWYIESSYSVVGSDELLKEDRMLLKVDKNTHKITGEYDTTTNDRKNATDSTYKSYPVKVVNNKIVFTKDVKDPALKQKIENNQFLIQSGDLTSILNSNDLKVTHDPTTDYYNLSGKLSNDNPNVKQLKRRYNIPRNASTKVELKGMSDLKGNNHQDQKLYFYFSSPGKDQIIYKESLTYNKLSEH</sequence>
<protein>
    <recommendedName>
        <fullName>Uncharacterized protein MW0186</fullName>
    </recommendedName>
</protein>
<reference key="1">
    <citation type="journal article" date="2002" name="Lancet">
        <title>Genome and virulence determinants of high virulence community-acquired MRSA.</title>
        <authorList>
            <person name="Baba T."/>
            <person name="Takeuchi F."/>
            <person name="Kuroda M."/>
            <person name="Yuzawa H."/>
            <person name="Aoki K."/>
            <person name="Oguchi A."/>
            <person name="Nagai Y."/>
            <person name="Iwama N."/>
            <person name="Asano K."/>
            <person name="Naimi T."/>
            <person name="Kuroda H."/>
            <person name="Cui L."/>
            <person name="Yamamoto K."/>
            <person name="Hiramatsu K."/>
        </authorList>
    </citation>
    <scope>NUCLEOTIDE SEQUENCE [LARGE SCALE GENOMIC DNA]</scope>
    <source>
        <strain>MW2</strain>
    </source>
</reference>
<feature type="chain" id="PRO_0000282175" description="Uncharacterized protein MW0186">
    <location>
        <begin position="1"/>
        <end position="257"/>
    </location>
</feature>
<feature type="transmembrane region" description="Helical" evidence="1">
    <location>
        <begin position="6"/>
        <end position="26"/>
    </location>
</feature>
<proteinExistence type="inferred from homology"/>
<accession>Q8NYK8</accession>
<name>Y186_STAAW</name>
<dbReference type="EMBL" id="BA000033">
    <property type="protein sequence ID" value="BAB94051.1"/>
    <property type="molecule type" value="Genomic_DNA"/>
</dbReference>
<dbReference type="RefSeq" id="WP_000643623.1">
    <property type="nucleotide sequence ID" value="NC_003923.1"/>
</dbReference>
<dbReference type="SMR" id="Q8NYK8"/>
<dbReference type="KEGG" id="sam:MW0186"/>
<dbReference type="HOGENOM" id="CLU_071589_0_1_9"/>
<dbReference type="GO" id="GO:0005886">
    <property type="term" value="C:plasma membrane"/>
    <property type="evidence" value="ECO:0007669"/>
    <property type="project" value="UniProtKB-SubCell"/>
</dbReference>
<dbReference type="Gene3D" id="2.50.20.40">
    <property type="match status" value="1"/>
</dbReference>
<dbReference type="InterPro" id="IPR007595">
    <property type="entry name" value="Csa"/>
</dbReference>
<dbReference type="InterPro" id="IPR038641">
    <property type="entry name" value="Csa_sf"/>
</dbReference>
<dbReference type="NCBIfam" id="TIGR01742">
    <property type="entry name" value="SA_tandem_lipo"/>
    <property type="match status" value="1"/>
</dbReference>
<dbReference type="Pfam" id="PF04507">
    <property type="entry name" value="DUF576"/>
    <property type="match status" value="1"/>
</dbReference>
<gene>
    <name type="ordered locus">MW0186</name>
</gene>
<keyword id="KW-1003">Cell membrane</keyword>
<keyword id="KW-0472">Membrane</keyword>
<keyword id="KW-0812">Transmembrane</keyword>
<keyword id="KW-1133">Transmembrane helix</keyword>
<evidence type="ECO:0000255" key="1"/>
<evidence type="ECO:0000305" key="2"/>
<organism>
    <name type="scientific">Staphylococcus aureus (strain MW2)</name>
    <dbReference type="NCBI Taxonomy" id="196620"/>
    <lineage>
        <taxon>Bacteria</taxon>
        <taxon>Bacillati</taxon>
        <taxon>Bacillota</taxon>
        <taxon>Bacilli</taxon>
        <taxon>Bacillales</taxon>
        <taxon>Staphylococcaceae</taxon>
        <taxon>Staphylococcus</taxon>
    </lineage>
</organism>